<dbReference type="EMBL" id="BC114200">
    <property type="protein sequence ID" value="AAI14201.1"/>
    <property type="molecule type" value="mRNA"/>
</dbReference>
<dbReference type="RefSeq" id="NP_001039423.1">
    <property type="nucleotide sequence ID" value="NM_001045958.2"/>
</dbReference>
<dbReference type="PDB" id="6MTD">
    <property type="method" value="EM"/>
    <property type="resolution" value="3.30 A"/>
    <property type="chains" value="X=39-156"/>
</dbReference>
<dbReference type="PDB" id="6MTE">
    <property type="method" value="EM"/>
    <property type="resolution" value="3.40 A"/>
    <property type="chains" value="X=39-156"/>
</dbReference>
<dbReference type="PDBsum" id="6MTD"/>
<dbReference type="PDBsum" id="6MTE"/>
<dbReference type="EMDB" id="EMD-9240"/>
<dbReference type="EMDB" id="EMD-9242"/>
<dbReference type="SMR" id="Q24JY1"/>
<dbReference type="FunCoup" id="Q24JY1">
    <property type="interactions" value="1996"/>
</dbReference>
<dbReference type="STRING" id="9913.ENSBTAP00000030092"/>
<dbReference type="PaxDb" id="9913-ENSBTAP00000030092"/>
<dbReference type="PeptideAtlas" id="Q24JY1"/>
<dbReference type="GeneID" id="507168"/>
<dbReference type="KEGG" id="bta:507168"/>
<dbReference type="CTD" id="6147"/>
<dbReference type="eggNOG" id="KOG1751">
    <property type="taxonomic scope" value="Eukaryota"/>
</dbReference>
<dbReference type="HOGENOM" id="CLU_037562_0_2_1"/>
<dbReference type="InParanoid" id="Q24JY1"/>
<dbReference type="OrthoDB" id="1267328at2759"/>
<dbReference type="TreeFam" id="TF314116"/>
<dbReference type="CD-CODE" id="D7FE2080">
    <property type="entry name" value="Nucleolus"/>
</dbReference>
<dbReference type="Proteomes" id="UP000009136">
    <property type="component" value="Unplaced"/>
</dbReference>
<dbReference type="GO" id="GO:0022625">
    <property type="term" value="C:cytosolic large ribosomal subunit"/>
    <property type="evidence" value="ECO:0000318"/>
    <property type="project" value="GO_Central"/>
</dbReference>
<dbReference type="GO" id="GO:0005634">
    <property type="term" value="C:nucleus"/>
    <property type="evidence" value="ECO:0000250"/>
    <property type="project" value="UniProtKB"/>
</dbReference>
<dbReference type="GO" id="GO:0019843">
    <property type="term" value="F:rRNA binding"/>
    <property type="evidence" value="ECO:0007669"/>
    <property type="project" value="UniProtKB-KW"/>
</dbReference>
<dbReference type="GO" id="GO:0003735">
    <property type="term" value="F:structural constituent of ribosome"/>
    <property type="evidence" value="ECO:0000318"/>
    <property type="project" value="GO_Central"/>
</dbReference>
<dbReference type="GO" id="GO:1904841">
    <property type="term" value="F:TORC2 complex binding"/>
    <property type="evidence" value="ECO:0000250"/>
    <property type="project" value="UniProtKB"/>
</dbReference>
<dbReference type="GO" id="GO:0006412">
    <property type="term" value="P:translation"/>
    <property type="evidence" value="ECO:0007669"/>
    <property type="project" value="InterPro"/>
</dbReference>
<dbReference type="FunFam" id="3.30.70.330:FF:001015">
    <property type="entry name" value="Uncharacterized protein"/>
    <property type="match status" value="1"/>
</dbReference>
<dbReference type="Gene3D" id="3.30.70.330">
    <property type="match status" value="1"/>
</dbReference>
<dbReference type="HAMAP" id="MF_01369_A">
    <property type="entry name" value="Ribosomal_uL23_A"/>
    <property type="match status" value="1"/>
</dbReference>
<dbReference type="InterPro" id="IPR012677">
    <property type="entry name" value="Nucleotide-bd_a/b_plait_sf"/>
</dbReference>
<dbReference type="InterPro" id="IPR019985">
    <property type="entry name" value="Ribosomal_uL23"/>
</dbReference>
<dbReference type="InterPro" id="IPR013025">
    <property type="entry name" value="Ribosomal_uL23-like"/>
</dbReference>
<dbReference type="InterPro" id="IPR012678">
    <property type="entry name" value="Ribosomal_uL23/eL15/eS24_sf"/>
</dbReference>
<dbReference type="InterPro" id="IPR001014">
    <property type="entry name" value="Ribosomal_uL23_CS"/>
</dbReference>
<dbReference type="InterPro" id="IPR005633">
    <property type="entry name" value="Ribosomal_uL23_N"/>
</dbReference>
<dbReference type="NCBIfam" id="NF011118">
    <property type="entry name" value="PRK14548.1"/>
    <property type="match status" value="1"/>
</dbReference>
<dbReference type="NCBIfam" id="TIGR03636">
    <property type="entry name" value="uL23_arch"/>
    <property type="match status" value="1"/>
</dbReference>
<dbReference type="PANTHER" id="PTHR11620">
    <property type="entry name" value="60S RIBOSOMAL PROTEIN L23A"/>
    <property type="match status" value="1"/>
</dbReference>
<dbReference type="Pfam" id="PF00276">
    <property type="entry name" value="Ribosomal_L23"/>
    <property type="match status" value="1"/>
</dbReference>
<dbReference type="Pfam" id="PF03939">
    <property type="entry name" value="Ribosomal_L23eN"/>
    <property type="match status" value="1"/>
</dbReference>
<dbReference type="SUPFAM" id="SSF54189">
    <property type="entry name" value="Ribosomal proteins S24e, L23 and L15e"/>
    <property type="match status" value="1"/>
</dbReference>
<dbReference type="PROSITE" id="PS00050">
    <property type="entry name" value="RIBOSOMAL_L23"/>
    <property type="match status" value="1"/>
</dbReference>
<protein>
    <recommendedName>
        <fullName evidence="4">Large ribosomal subunit protein uL23</fullName>
    </recommendedName>
    <alternativeName>
        <fullName>60S ribosomal protein L23a</fullName>
    </alternativeName>
</protein>
<comment type="function">
    <text evidence="1">Component of the large ribosomal subunit. The ribosome is a large ribonucleoprotein complex responsible for the synthesis of proteins in the cell. Binds a specific region on the 26S rRNA. May promote p53/TP53 degradation possibly through the stimulation of MDM2-mediated TP53 polyubiquitination.</text>
</comment>
<comment type="subunit">
    <text evidence="1">Component of the large ribosomal subunit. Interacts with LYAR and GNL2. Interacts with MDM2; this interaction may promote MDM2-mediated p53/TP53 polyubiquitination. Directly interacts (via BIB domain) with IPO5, IPO7, KPNB1 and TNPO1; these interactions are involved in RPL23A nuclear import for the assembly of ribosomal subunits. Interacts with IPO8.</text>
</comment>
<comment type="subcellular location">
    <subcellularLocation>
        <location evidence="1">Cytoplasm</location>
    </subcellularLocation>
    <subcellularLocation>
        <location evidence="1">Nucleus</location>
    </subcellularLocation>
    <text evidence="1">Although RPL23A is functional within the cytoplasm, the assembly of ribosomal subunits occurs in the nucleus. RPL23A nuclear import is mediated by IPO5/RanBP5, IPO7/RanBP7, KPNB1/importin-beta or TPNO1/Trn.</text>
</comment>
<comment type="domain">
    <text evidence="1">The N-terminal beta-like import receptor binding (BIB) domain mediates interaction with IPO5, IPO7, KPNB1 and TNPO1.</text>
</comment>
<comment type="PTM">
    <text evidence="2">N-terminus is methylated by METTL11A/NTM1.</text>
</comment>
<comment type="PTM">
    <text evidence="2">Citrullinated by PADI4.</text>
</comment>
<comment type="similarity">
    <text evidence="4">Belongs to the universal ribosomal protein uL23 family.</text>
</comment>
<name>RL23A_BOVIN</name>
<organism>
    <name type="scientific">Bos taurus</name>
    <name type="common">Bovine</name>
    <dbReference type="NCBI Taxonomy" id="9913"/>
    <lineage>
        <taxon>Eukaryota</taxon>
        <taxon>Metazoa</taxon>
        <taxon>Chordata</taxon>
        <taxon>Craniata</taxon>
        <taxon>Vertebrata</taxon>
        <taxon>Euteleostomi</taxon>
        <taxon>Mammalia</taxon>
        <taxon>Eutheria</taxon>
        <taxon>Laurasiatheria</taxon>
        <taxon>Artiodactyla</taxon>
        <taxon>Ruminantia</taxon>
        <taxon>Pecora</taxon>
        <taxon>Bovidae</taxon>
        <taxon>Bovinae</taxon>
        <taxon>Bos</taxon>
    </lineage>
</organism>
<keyword id="KW-0002">3D-structure</keyword>
<keyword id="KW-0007">Acetylation</keyword>
<keyword id="KW-0164">Citrullination</keyword>
<keyword id="KW-0963">Cytoplasm</keyword>
<keyword id="KW-1017">Isopeptide bond</keyword>
<keyword id="KW-0488">Methylation</keyword>
<keyword id="KW-0539">Nucleus</keyword>
<keyword id="KW-0597">Phosphoprotein</keyword>
<keyword id="KW-1185">Reference proteome</keyword>
<keyword id="KW-0687">Ribonucleoprotein</keyword>
<keyword id="KW-0689">Ribosomal protein</keyword>
<keyword id="KW-0694">RNA-binding</keyword>
<keyword id="KW-0699">rRNA-binding</keyword>
<keyword id="KW-0832">Ubl conjugation</keyword>
<reference key="1">
    <citation type="submission" date="2006-02" db="EMBL/GenBank/DDBJ databases">
        <authorList>
            <consortium name="NIH - Mammalian Gene Collection (MGC) project"/>
        </authorList>
    </citation>
    <scope>NUCLEOTIDE SEQUENCE [LARGE SCALE MRNA]</scope>
    <source>
        <strain>Hereford</strain>
        <tissue>Thymus</tissue>
    </source>
</reference>
<accession>Q24JY1</accession>
<proteinExistence type="evidence at protein level"/>
<feature type="initiator methionine" description="Removed" evidence="2">
    <location>
        <position position="1"/>
    </location>
</feature>
<feature type="chain" id="PRO_0000240144" description="Large ribosomal subunit protein uL23">
    <location>
        <begin position="2"/>
        <end position="156"/>
    </location>
</feature>
<feature type="region of interest" description="Disordered" evidence="3">
    <location>
        <begin position="1"/>
        <end position="67"/>
    </location>
</feature>
<feature type="region of interest" description="Beta-like import receptor binding (BIB) domain" evidence="1">
    <location>
        <begin position="32"/>
        <end position="74"/>
    </location>
</feature>
<feature type="compositionally biased region" description="Basic and acidic residues" evidence="3">
    <location>
        <begin position="1"/>
        <end position="19"/>
    </location>
</feature>
<feature type="compositionally biased region" description="Basic residues" evidence="3">
    <location>
        <begin position="20"/>
        <end position="67"/>
    </location>
</feature>
<feature type="modified residue" description="N,N,N-trimethylalanine" evidence="2">
    <location>
        <position position="2"/>
    </location>
</feature>
<feature type="modified residue" description="Citrulline" evidence="2">
    <location>
        <position position="41"/>
    </location>
</feature>
<feature type="modified residue" description="Phosphoserine" evidence="1">
    <location>
        <position position="43"/>
    </location>
</feature>
<feature type="modified residue" description="Phosphothreonine" evidence="1">
    <location>
        <position position="45"/>
    </location>
</feature>
<feature type="modified residue" description="N6-acetyllysine" evidence="2">
    <location>
        <position position="70"/>
    </location>
</feature>
<feature type="cross-link" description="Glycyl lysine isopeptide (Lys-Gly) (interchain with G-Cter in SUMO2)" evidence="1">
    <location>
        <position position="14"/>
    </location>
</feature>
<gene>
    <name type="primary">RPL23A</name>
</gene>
<sequence length="156" mass="17695">MAPKAKKEAPAPPKAEAKAKALKAKKAVLKGVHSHKKKKIRTSPTFRRPKTLRLRRQPKYPRKSAPRRNKLDHYAIIKFPLTTESAMKKIEDNNTLVFIVDVKANKHQIKQAVKKLYDIDVAKVNTLIRPDGEKKAYVRLAPDYDALDVANKIGII</sequence>
<evidence type="ECO:0000250" key="1">
    <source>
        <dbReference type="UniProtKB" id="P62750"/>
    </source>
</evidence>
<evidence type="ECO:0000250" key="2">
    <source>
        <dbReference type="UniProtKB" id="P62751"/>
    </source>
</evidence>
<evidence type="ECO:0000256" key="3">
    <source>
        <dbReference type="SAM" id="MobiDB-lite"/>
    </source>
</evidence>
<evidence type="ECO:0000305" key="4"/>